<sequence length="529" mass="55777">MTDLSPVRRALLSVSDKTGLIELGQALAARGVELLSTGGTAKALRDAGLTVRDVAEVTGFPEMMDGRVKTLHPMVHGGLLALRDNADHVAAMEQHGIAGIDLLVVNLYPFEATVAKGADYDDCIENIDIGGPAMIRAASKNHAFVNVVVDVADYDALLAEMAANDGQTSYAFRQRLAQTAYARTAAYDAAVSNWMADQLALEAPRRRAFAGELKQTLRYGENSHQQAAFYTDGSNRPGVATARQLQGKELSYNNINDTDAAFELVAEFAPENGPACAIIKHANPCGVALGATLSEAYQKAFDCDRTSAFGGIVALNQPLDAETAGKIVEIFTEVVIAPGASDEAIAIFATKKNLRLLLTDGLPDPRQPIVAMKQVAGGLLVQDKDVGHVDLTDLKVVTRKAPTEAQMADLLFAWKVGKHVKSNAIVYVKDGATVGVGAGQMSRLDSANVAAAKAQRMATELGLPESPAKGCAVASDAFFPFADGLLEAAAAGGACVIQPGGSMRDDEVIKAADEAGLAMVFTGMRHFRH</sequence>
<reference key="1">
    <citation type="journal article" date="2004" name="Nature">
        <title>Genome sequence of Silicibacter pomeroyi reveals adaptations to the marine environment.</title>
        <authorList>
            <person name="Moran M.A."/>
            <person name="Buchan A."/>
            <person name="Gonzalez J.M."/>
            <person name="Heidelberg J.F."/>
            <person name="Whitman W.B."/>
            <person name="Kiene R.P."/>
            <person name="Henriksen J.R."/>
            <person name="King G.M."/>
            <person name="Belas R."/>
            <person name="Fuqua C."/>
            <person name="Brinkac L.M."/>
            <person name="Lewis M."/>
            <person name="Johri S."/>
            <person name="Weaver B."/>
            <person name="Pai G."/>
            <person name="Eisen J.A."/>
            <person name="Rahe E."/>
            <person name="Sheldon W.M."/>
            <person name="Ye W."/>
            <person name="Miller T.R."/>
            <person name="Carlton J."/>
            <person name="Rasko D.A."/>
            <person name="Paulsen I.T."/>
            <person name="Ren Q."/>
            <person name="Daugherty S.C."/>
            <person name="DeBoy R.T."/>
            <person name="Dodson R.J."/>
            <person name="Durkin A.S."/>
            <person name="Madupu R."/>
            <person name="Nelson W.C."/>
            <person name="Sullivan S.A."/>
            <person name="Rosovitz M.J."/>
            <person name="Haft D.H."/>
            <person name="Selengut J."/>
            <person name="Ward N."/>
        </authorList>
    </citation>
    <scope>NUCLEOTIDE SEQUENCE [LARGE SCALE GENOMIC DNA]</scope>
    <source>
        <strain>ATCC 700808 / DSM 15171 / DSS-3</strain>
    </source>
</reference>
<reference key="2">
    <citation type="journal article" date="2014" name="Stand. Genomic Sci.">
        <title>An updated genome annotation for the model marine bacterium Ruegeria pomeroyi DSS-3.</title>
        <authorList>
            <person name="Rivers A.R."/>
            <person name="Smith C.B."/>
            <person name="Moran M.A."/>
        </authorList>
    </citation>
    <scope>GENOME REANNOTATION</scope>
    <source>
        <strain>ATCC 700808 / DSM 15171 / DSS-3</strain>
    </source>
</reference>
<dbReference type="EC" id="2.1.2.3" evidence="1"/>
<dbReference type="EC" id="3.5.4.10" evidence="1"/>
<dbReference type="EMBL" id="CP000031">
    <property type="protein sequence ID" value="AAV96601.1"/>
    <property type="molecule type" value="Genomic_DNA"/>
</dbReference>
<dbReference type="RefSeq" id="WP_011049057.1">
    <property type="nucleotide sequence ID" value="NC_003911.12"/>
</dbReference>
<dbReference type="SMR" id="Q5LN38"/>
<dbReference type="STRING" id="246200.SPO3374"/>
<dbReference type="PaxDb" id="246200-SPO3374"/>
<dbReference type="KEGG" id="sil:SPO3374"/>
<dbReference type="eggNOG" id="COG0138">
    <property type="taxonomic scope" value="Bacteria"/>
</dbReference>
<dbReference type="HOGENOM" id="CLU_016316_5_2_5"/>
<dbReference type="OrthoDB" id="9802065at2"/>
<dbReference type="UniPathway" id="UPA00074">
    <property type="reaction ID" value="UER00133"/>
</dbReference>
<dbReference type="UniPathway" id="UPA00074">
    <property type="reaction ID" value="UER00135"/>
</dbReference>
<dbReference type="Proteomes" id="UP000001023">
    <property type="component" value="Chromosome"/>
</dbReference>
<dbReference type="GO" id="GO:0005829">
    <property type="term" value="C:cytosol"/>
    <property type="evidence" value="ECO:0007669"/>
    <property type="project" value="TreeGrafter"/>
</dbReference>
<dbReference type="GO" id="GO:0003937">
    <property type="term" value="F:IMP cyclohydrolase activity"/>
    <property type="evidence" value="ECO:0007669"/>
    <property type="project" value="UniProtKB-UniRule"/>
</dbReference>
<dbReference type="GO" id="GO:0004643">
    <property type="term" value="F:phosphoribosylaminoimidazolecarboxamide formyltransferase activity"/>
    <property type="evidence" value="ECO:0007669"/>
    <property type="project" value="UniProtKB-UniRule"/>
</dbReference>
<dbReference type="GO" id="GO:0006189">
    <property type="term" value="P:'de novo' IMP biosynthetic process"/>
    <property type="evidence" value="ECO:0007669"/>
    <property type="project" value="UniProtKB-UniRule"/>
</dbReference>
<dbReference type="CDD" id="cd01421">
    <property type="entry name" value="IMPCH"/>
    <property type="match status" value="1"/>
</dbReference>
<dbReference type="FunFam" id="3.40.140.20:FF:000001">
    <property type="entry name" value="Bifunctional purine biosynthesis protein PurH"/>
    <property type="match status" value="1"/>
</dbReference>
<dbReference type="FunFam" id="3.40.140.20:FF:000002">
    <property type="entry name" value="Bifunctional purine biosynthesis protein PurH"/>
    <property type="match status" value="1"/>
</dbReference>
<dbReference type="FunFam" id="3.40.50.1380:FF:000001">
    <property type="entry name" value="Bifunctional purine biosynthesis protein PurH"/>
    <property type="match status" value="1"/>
</dbReference>
<dbReference type="Gene3D" id="3.40.140.20">
    <property type="match status" value="2"/>
</dbReference>
<dbReference type="Gene3D" id="3.40.50.1380">
    <property type="entry name" value="Methylglyoxal synthase-like domain"/>
    <property type="match status" value="1"/>
</dbReference>
<dbReference type="HAMAP" id="MF_00139">
    <property type="entry name" value="PurH"/>
    <property type="match status" value="1"/>
</dbReference>
<dbReference type="InterPro" id="IPR024051">
    <property type="entry name" value="AICAR_Tfase_dup_dom_sf"/>
</dbReference>
<dbReference type="InterPro" id="IPR016193">
    <property type="entry name" value="Cytidine_deaminase-like"/>
</dbReference>
<dbReference type="InterPro" id="IPR011607">
    <property type="entry name" value="MGS-like_dom"/>
</dbReference>
<dbReference type="InterPro" id="IPR036914">
    <property type="entry name" value="MGS-like_dom_sf"/>
</dbReference>
<dbReference type="InterPro" id="IPR002695">
    <property type="entry name" value="PurH-like"/>
</dbReference>
<dbReference type="NCBIfam" id="NF002049">
    <property type="entry name" value="PRK00881.1"/>
    <property type="match status" value="1"/>
</dbReference>
<dbReference type="NCBIfam" id="TIGR00355">
    <property type="entry name" value="purH"/>
    <property type="match status" value="1"/>
</dbReference>
<dbReference type="PANTHER" id="PTHR11692:SF0">
    <property type="entry name" value="BIFUNCTIONAL PURINE BIOSYNTHESIS PROTEIN ATIC"/>
    <property type="match status" value="1"/>
</dbReference>
<dbReference type="PANTHER" id="PTHR11692">
    <property type="entry name" value="BIFUNCTIONAL PURINE BIOSYNTHESIS PROTEIN PURH"/>
    <property type="match status" value="1"/>
</dbReference>
<dbReference type="Pfam" id="PF01808">
    <property type="entry name" value="AICARFT_IMPCHas"/>
    <property type="match status" value="1"/>
</dbReference>
<dbReference type="Pfam" id="PF02142">
    <property type="entry name" value="MGS"/>
    <property type="match status" value="1"/>
</dbReference>
<dbReference type="PIRSF" id="PIRSF000414">
    <property type="entry name" value="AICARFT_IMPCHas"/>
    <property type="match status" value="1"/>
</dbReference>
<dbReference type="SMART" id="SM00798">
    <property type="entry name" value="AICARFT_IMPCHas"/>
    <property type="match status" value="1"/>
</dbReference>
<dbReference type="SMART" id="SM00851">
    <property type="entry name" value="MGS"/>
    <property type="match status" value="1"/>
</dbReference>
<dbReference type="SUPFAM" id="SSF53927">
    <property type="entry name" value="Cytidine deaminase-like"/>
    <property type="match status" value="1"/>
</dbReference>
<dbReference type="SUPFAM" id="SSF52335">
    <property type="entry name" value="Methylglyoxal synthase-like"/>
    <property type="match status" value="1"/>
</dbReference>
<dbReference type="PROSITE" id="PS51855">
    <property type="entry name" value="MGS"/>
    <property type="match status" value="1"/>
</dbReference>
<gene>
    <name evidence="1" type="primary">purH</name>
    <name type="ordered locus">SPO3374</name>
</gene>
<accession>Q5LN38</accession>
<comment type="catalytic activity">
    <reaction evidence="1">
        <text>(6R)-10-formyltetrahydrofolate + 5-amino-1-(5-phospho-beta-D-ribosyl)imidazole-4-carboxamide = 5-formamido-1-(5-phospho-D-ribosyl)imidazole-4-carboxamide + (6S)-5,6,7,8-tetrahydrofolate</text>
        <dbReference type="Rhea" id="RHEA:22192"/>
        <dbReference type="ChEBI" id="CHEBI:57453"/>
        <dbReference type="ChEBI" id="CHEBI:58467"/>
        <dbReference type="ChEBI" id="CHEBI:58475"/>
        <dbReference type="ChEBI" id="CHEBI:195366"/>
        <dbReference type="EC" id="2.1.2.3"/>
    </reaction>
</comment>
<comment type="catalytic activity">
    <reaction evidence="1">
        <text>IMP + H2O = 5-formamido-1-(5-phospho-D-ribosyl)imidazole-4-carboxamide</text>
        <dbReference type="Rhea" id="RHEA:18445"/>
        <dbReference type="ChEBI" id="CHEBI:15377"/>
        <dbReference type="ChEBI" id="CHEBI:58053"/>
        <dbReference type="ChEBI" id="CHEBI:58467"/>
        <dbReference type="EC" id="3.5.4.10"/>
    </reaction>
</comment>
<comment type="pathway">
    <text evidence="1">Purine metabolism; IMP biosynthesis via de novo pathway; 5-formamido-1-(5-phospho-D-ribosyl)imidazole-4-carboxamide from 5-amino-1-(5-phospho-D-ribosyl)imidazole-4-carboxamide (10-formyl THF route): step 1/1.</text>
</comment>
<comment type="pathway">
    <text evidence="1">Purine metabolism; IMP biosynthesis via de novo pathway; IMP from 5-formamido-1-(5-phospho-D-ribosyl)imidazole-4-carboxamide: step 1/1.</text>
</comment>
<comment type="domain">
    <text evidence="1">The IMP cyclohydrolase activity resides in the N-terminal region.</text>
</comment>
<comment type="similarity">
    <text evidence="1">Belongs to the PurH family.</text>
</comment>
<organism>
    <name type="scientific">Ruegeria pomeroyi (strain ATCC 700808 / DSM 15171 / DSS-3)</name>
    <name type="common">Silicibacter pomeroyi</name>
    <dbReference type="NCBI Taxonomy" id="246200"/>
    <lineage>
        <taxon>Bacteria</taxon>
        <taxon>Pseudomonadati</taxon>
        <taxon>Pseudomonadota</taxon>
        <taxon>Alphaproteobacteria</taxon>
        <taxon>Rhodobacterales</taxon>
        <taxon>Roseobacteraceae</taxon>
        <taxon>Ruegeria</taxon>
    </lineage>
</organism>
<protein>
    <recommendedName>
        <fullName evidence="1">Bifunctional purine biosynthesis protein PurH</fullName>
    </recommendedName>
    <domain>
        <recommendedName>
            <fullName evidence="1">Phosphoribosylaminoimidazolecarboxamide formyltransferase</fullName>
            <ecNumber evidence="1">2.1.2.3</ecNumber>
        </recommendedName>
        <alternativeName>
            <fullName evidence="1">AICAR transformylase</fullName>
        </alternativeName>
    </domain>
    <domain>
        <recommendedName>
            <fullName evidence="1">IMP cyclohydrolase</fullName>
            <ecNumber evidence="1">3.5.4.10</ecNumber>
        </recommendedName>
        <alternativeName>
            <fullName evidence="1">ATIC</fullName>
        </alternativeName>
        <alternativeName>
            <fullName evidence="1">IMP synthase</fullName>
        </alternativeName>
        <alternativeName>
            <fullName evidence="1">Inosinicase</fullName>
        </alternativeName>
    </domain>
</protein>
<name>PUR9_RUEPO</name>
<evidence type="ECO:0000255" key="1">
    <source>
        <dbReference type="HAMAP-Rule" id="MF_00139"/>
    </source>
</evidence>
<evidence type="ECO:0000255" key="2">
    <source>
        <dbReference type="PROSITE-ProRule" id="PRU01202"/>
    </source>
</evidence>
<feature type="chain" id="PRO_1000057914" description="Bifunctional purine biosynthesis protein PurH">
    <location>
        <begin position="1"/>
        <end position="529"/>
    </location>
</feature>
<feature type="domain" description="MGS-like" evidence="2">
    <location>
        <begin position="2"/>
        <end position="149"/>
    </location>
</feature>
<keyword id="KW-0378">Hydrolase</keyword>
<keyword id="KW-0511">Multifunctional enzyme</keyword>
<keyword id="KW-0658">Purine biosynthesis</keyword>
<keyword id="KW-1185">Reference proteome</keyword>
<keyword id="KW-0808">Transferase</keyword>
<proteinExistence type="inferred from homology"/>